<sequence length="186" mass="20203">MLNILNNVSNSSLYSAASNATAQTGSNLINDLVPETLTASGISIAISVFSVIGTIVIALSVLPQTIKTLREKDTASLSLLLFLLNGIATAFLTLYGIGLVTVHPNSFSFLVDIKNGMFIYNREEWVAGYLICGIFLIMGEALCSVTSFIVLFCKVNNMIKAKKMGMSEEEYYEKQIKPFLKVKGAN</sequence>
<comment type="subcellular location">
    <subcellularLocation>
        <location evidence="2">Cell membrane</location>
        <topology evidence="2">Multi-pass membrane protein</topology>
    </subcellularLocation>
</comment>
<comment type="similarity">
    <text evidence="2">To U.parvum UU008, UU041 and UU042.</text>
</comment>
<accession>Q9PRD8</accession>
<proteinExistence type="predicted"/>
<organism>
    <name type="scientific">Ureaplasma parvum serovar 3 (strain ATCC 700970)</name>
    <dbReference type="NCBI Taxonomy" id="273119"/>
    <lineage>
        <taxon>Bacteria</taxon>
        <taxon>Bacillati</taxon>
        <taxon>Mycoplasmatota</taxon>
        <taxon>Mycoplasmoidales</taxon>
        <taxon>Mycoplasmoidaceae</taxon>
        <taxon>Ureaplasma</taxon>
    </lineage>
</organism>
<feature type="chain" id="PRO_0000220780" description="Uncharacterized protein UU007">
    <location>
        <begin position="1"/>
        <end position="186"/>
    </location>
</feature>
<feature type="transmembrane region" description="Helical" evidence="1">
    <location>
        <begin position="42"/>
        <end position="62"/>
    </location>
</feature>
<feature type="transmembrane region" description="Helical" evidence="1">
    <location>
        <begin position="80"/>
        <end position="100"/>
    </location>
</feature>
<feature type="transmembrane region" description="Helical" evidence="1">
    <location>
        <begin position="131"/>
        <end position="151"/>
    </location>
</feature>
<gene>
    <name type="ordered locus">UU007</name>
</gene>
<name>Y007_UREPA</name>
<keyword id="KW-1003">Cell membrane</keyword>
<keyword id="KW-0472">Membrane</keyword>
<keyword id="KW-1185">Reference proteome</keyword>
<keyword id="KW-0812">Transmembrane</keyword>
<keyword id="KW-1133">Transmembrane helix</keyword>
<protein>
    <recommendedName>
        <fullName>Uncharacterized protein UU007</fullName>
    </recommendedName>
</protein>
<reference key="1">
    <citation type="journal article" date="2000" name="Nature">
        <title>The complete sequence of the mucosal pathogen Ureaplasma urealyticum.</title>
        <authorList>
            <person name="Glass J.I."/>
            <person name="Lefkowitz E.J."/>
            <person name="Glass J.S."/>
            <person name="Heiner C.R."/>
            <person name="Chen E.Y."/>
            <person name="Cassell G.H."/>
        </authorList>
    </citation>
    <scope>NUCLEOTIDE SEQUENCE [LARGE SCALE GENOMIC DNA]</scope>
    <source>
        <strain>ATCC 700970</strain>
    </source>
</reference>
<dbReference type="EMBL" id="AF222894">
    <property type="protein sequence ID" value="AAF30412.1"/>
    <property type="molecule type" value="Genomic_DNA"/>
</dbReference>
<dbReference type="RefSeq" id="WP_006688754.1">
    <property type="nucleotide sequence ID" value="NC_002162.1"/>
</dbReference>
<dbReference type="STRING" id="273119.UU007"/>
<dbReference type="EnsemblBacteria" id="AAF30412">
    <property type="protein sequence ID" value="AAF30412"/>
    <property type="gene ID" value="UU007"/>
</dbReference>
<dbReference type="GeneID" id="29672274"/>
<dbReference type="KEGG" id="uur:UU007"/>
<dbReference type="eggNOG" id="COG4095">
    <property type="taxonomic scope" value="Bacteria"/>
</dbReference>
<dbReference type="HOGENOM" id="CLU_1453826_0_0_14"/>
<dbReference type="OrthoDB" id="9814012at2"/>
<dbReference type="Proteomes" id="UP000000423">
    <property type="component" value="Chromosome"/>
</dbReference>
<dbReference type="GO" id="GO:0005886">
    <property type="term" value="C:plasma membrane"/>
    <property type="evidence" value="ECO:0007669"/>
    <property type="project" value="UniProtKB-SubCell"/>
</dbReference>
<dbReference type="Gene3D" id="1.20.1280.290">
    <property type="match status" value="1"/>
</dbReference>
<dbReference type="InterPro" id="IPR006603">
    <property type="entry name" value="PQ-loop_rpt"/>
</dbReference>
<dbReference type="Pfam" id="PF04193">
    <property type="entry name" value="PQ-loop"/>
    <property type="match status" value="1"/>
</dbReference>
<evidence type="ECO:0000255" key="1"/>
<evidence type="ECO:0000305" key="2"/>